<name>CAIT_SHISS</name>
<protein>
    <recommendedName>
        <fullName evidence="1">L-carnitine/gamma-butyrobetaine antiporter</fullName>
    </recommendedName>
</protein>
<evidence type="ECO:0000255" key="1">
    <source>
        <dbReference type="HAMAP-Rule" id="MF_01049"/>
    </source>
</evidence>
<feature type="chain" id="PRO_1000064337" description="L-carnitine/gamma-butyrobetaine antiporter">
    <location>
        <begin position="1"/>
        <end position="504"/>
    </location>
</feature>
<feature type="transmembrane region" description="Helical" evidence="1">
    <location>
        <begin position="10"/>
        <end position="30"/>
    </location>
</feature>
<feature type="transmembrane region" description="Helical" evidence="1">
    <location>
        <begin position="51"/>
        <end position="71"/>
    </location>
</feature>
<feature type="transmembrane region" description="Helical" evidence="1">
    <location>
        <begin position="92"/>
        <end position="112"/>
    </location>
</feature>
<feature type="transmembrane region" description="Helical" evidence="1">
    <location>
        <begin position="143"/>
        <end position="163"/>
    </location>
</feature>
<feature type="transmembrane region" description="Helical" evidence="1">
    <location>
        <begin position="195"/>
        <end position="215"/>
    </location>
</feature>
<feature type="transmembrane region" description="Helical" evidence="1">
    <location>
        <begin position="231"/>
        <end position="251"/>
    </location>
</feature>
<feature type="transmembrane region" description="Helical" evidence="1">
    <location>
        <begin position="263"/>
        <end position="283"/>
    </location>
</feature>
<feature type="transmembrane region" description="Helical" evidence="1">
    <location>
        <begin position="316"/>
        <end position="336"/>
    </location>
</feature>
<feature type="transmembrane region" description="Helical" evidence="1">
    <location>
        <begin position="347"/>
        <end position="367"/>
    </location>
</feature>
<feature type="transmembrane region" description="Helical" evidence="1">
    <location>
        <begin position="398"/>
        <end position="418"/>
    </location>
</feature>
<feature type="transmembrane region" description="Helical" evidence="1">
    <location>
        <begin position="446"/>
        <end position="466"/>
    </location>
</feature>
<feature type="transmembrane region" description="Helical" evidence="1">
    <location>
        <begin position="475"/>
        <end position="495"/>
    </location>
</feature>
<sequence length="504" mass="56587">MKNEKRKTGIEPKVFFPPLIIVGILCWLTVRDLDAANVVINAVFSYVTNVWGWAFEWYMVVMLFGWFWLVFGPYAKKRLGNEPPEFSTASWIFMMFASCTSAAVLFWGSIEIYYYISTPPFGLEPNSTGAKELGLAYSLFHWGPLPWATYSFLSVAFAYFFFVRKMEVIRPSSTLVPLVGEKHAKGLFGTIVDNFYLVALIFAMGTSLGLATPLVTECMQWLFGIPHTLQLDAIIITCWIILNAICVACGLQKGVRIASDVRSYLSFLMLGWVFIVSGASFIMNYFTDSVGMLLMYLPRMLFYTDPIAKGGFPQGWTVFYWAWWVIYAIQMSIFLARISRGRTVRELCFGMVLGLTASTWILWTVLGSNTLLLIDKNIINIPNLIEQYGVARAIIETWAALPLSTATMWGFFILCFIATVTLVNACSYTLAMSTCREVRDGEEPPLLVRIGWSILVGIIGIVLLALGGLKPIQTAIIAGGCPLFFVNIMVTLSFIKDAKQNWKD</sequence>
<accession>Q3Z5W8</accession>
<organism>
    <name type="scientific">Shigella sonnei (strain Ss046)</name>
    <dbReference type="NCBI Taxonomy" id="300269"/>
    <lineage>
        <taxon>Bacteria</taxon>
        <taxon>Pseudomonadati</taxon>
        <taxon>Pseudomonadota</taxon>
        <taxon>Gammaproteobacteria</taxon>
        <taxon>Enterobacterales</taxon>
        <taxon>Enterobacteriaceae</taxon>
        <taxon>Shigella</taxon>
    </lineage>
</organism>
<proteinExistence type="inferred from homology"/>
<comment type="function">
    <text evidence="1">Catalyzes the exchange of L-carnitine for gamma-butyrobetaine.</text>
</comment>
<comment type="catalytic activity">
    <reaction evidence="1">
        <text>4-(trimethylamino)butanoate(in) + (R)-carnitine(out) = 4-(trimethylamino)butanoate(out) + (R)-carnitine(in)</text>
        <dbReference type="Rhea" id="RHEA:29427"/>
        <dbReference type="ChEBI" id="CHEBI:16244"/>
        <dbReference type="ChEBI" id="CHEBI:16347"/>
    </reaction>
</comment>
<comment type="pathway">
    <text evidence="1">Amine and polyamine metabolism; carnitine metabolism.</text>
</comment>
<comment type="subunit">
    <text evidence="1">Homotrimer.</text>
</comment>
<comment type="subcellular location">
    <subcellularLocation>
        <location evidence="1">Cell inner membrane</location>
        <topology evidence="1">Multi-pass membrane protein</topology>
    </subcellularLocation>
</comment>
<comment type="similarity">
    <text evidence="1">Belongs to the BCCT transporter (TC 2.A.15) family. CaiT subfamily.</text>
</comment>
<keyword id="KW-0050">Antiport</keyword>
<keyword id="KW-0997">Cell inner membrane</keyword>
<keyword id="KW-1003">Cell membrane</keyword>
<keyword id="KW-0472">Membrane</keyword>
<keyword id="KW-1185">Reference proteome</keyword>
<keyword id="KW-0812">Transmembrane</keyword>
<keyword id="KW-1133">Transmembrane helix</keyword>
<keyword id="KW-0813">Transport</keyword>
<reference key="1">
    <citation type="journal article" date="2005" name="Nucleic Acids Res.">
        <title>Genome dynamics and diversity of Shigella species, the etiologic agents of bacillary dysentery.</title>
        <authorList>
            <person name="Yang F."/>
            <person name="Yang J."/>
            <person name="Zhang X."/>
            <person name="Chen L."/>
            <person name="Jiang Y."/>
            <person name="Yan Y."/>
            <person name="Tang X."/>
            <person name="Wang J."/>
            <person name="Xiong Z."/>
            <person name="Dong J."/>
            <person name="Xue Y."/>
            <person name="Zhu Y."/>
            <person name="Xu X."/>
            <person name="Sun L."/>
            <person name="Chen S."/>
            <person name="Nie H."/>
            <person name="Peng J."/>
            <person name="Xu J."/>
            <person name="Wang Y."/>
            <person name="Yuan Z."/>
            <person name="Wen Y."/>
            <person name="Yao Z."/>
            <person name="Shen Y."/>
            <person name="Qiang B."/>
            <person name="Hou Y."/>
            <person name="Yu J."/>
            <person name="Jin Q."/>
        </authorList>
    </citation>
    <scope>NUCLEOTIDE SEQUENCE [LARGE SCALE GENOMIC DNA]</scope>
    <source>
        <strain>Ss046</strain>
    </source>
</reference>
<gene>
    <name evidence="1" type="primary">caiT</name>
    <name type="ordered locus">SSON_0048</name>
</gene>
<dbReference type="EMBL" id="CP000038">
    <property type="protein sequence ID" value="AAZ86844.1"/>
    <property type="molecule type" value="Genomic_DNA"/>
</dbReference>
<dbReference type="RefSeq" id="WP_000787103.1">
    <property type="nucleotide sequence ID" value="NC_007384.1"/>
</dbReference>
<dbReference type="SMR" id="Q3Z5W8"/>
<dbReference type="GeneID" id="93777395"/>
<dbReference type="KEGG" id="ssn:SSON_0048"/>
<dbReference type="HOGENOM" id="CLU_010118_6_0_6"/>
<dbReference type="UniPathway" id="UPA00117"/>
<dbReference type="Proteomes" id="UP000002529">
    <property type="component" value="Chromosome"/>
</dbReference>
<dbReference type="GO" id="GO:0005886">
    <property type="term" value="C:plasma membrane"/>
    <property type="evidence" value="ECO:0007669"/>
    <property type="project" value="UniProtKB-SubCell"/>
</dbReference>
<dbReference type="GO" id="GO:0044667">
    <property type="term" value="F:(R)-carnitine:4-(trimethylammonio)butanoate antiporter activity"/>
    <property type="evidence" value="ECO:0007669"/>
    <property type="project" value="UniProtKB-UniRule"/>
</dbReference>
<dbReference type="GO" id="GO:1900751">
    <property type="term" value="P:4-(trimethylammonio)butanoate transport"/>
    <property type="evidence" value="ECO:0007669"/>
    <property type="project" value="InterPro"/>
</dbReference>
<dbReference type="GO" id="GO:0009437">
    <property type="term" value="P:carnitine metabolic process"/>
    <property type="evidence" value="ECO:0007669"/>
    <property type="project" value="UniProtKB-UniRule"/>
</dbReference>
<dbReference type="HAMAP" id="MF_01049">
    <property type="entry name" value="CaiT"/>
    <property type="match status" value="1"/>
</dbReference>
<dbReference type="InterPro" id="IPR018093">
    <property type="entry name" value="BCCT_CS"/>
</dbReference>
<dbReference type="InterPro" id="IPR000060">
    <property type="entry name" value="BCCT_transptr"/>
</dbReference>
<dbReference type="InterPro" id="IPR023449">
    <property type="entry name" value="BCCT_transptr_CaiT"/>
</dbReference>
<dbReference type="NCBIfam" id="TIGR00842">
    <property type="entry name" value="bcct"/>
    <property type="match status" value="1"/>
</dbReference>
<dbReference type="NCBIfam" id="NF002887">
    <property type="entry name" value="PRK03356.1"/>
    <property type="match status" value="1"/>
</dbReference>
<dbReference type="PANTHER" id="PTHR30047">
    <property type="entry name" value="HIGH-AFFINITY CHOLINE TRANSPORT PROTEIN-RELATED"/>
    <property type="match status" value="1"/>
</dbReference>
<dbReference type="PANTHER" id="PTHR30047:SF11">
    <property type="entry name" value="L-CARNITINE_GAMMA-BUTYROBETAINE ANTIPORTER"/>
    <property type="match status" value="1"/>
</dbReference>
<dbReference type="Pfam" id="PF02028">
    <property type="entry name" value="BCCT"/>
    <property type="match status" value="1"/>
</dbReference>
<dbReference type="PROSITE" id="PS01303">
    <property type="entry name" value="BCCT"/>
    <property type="match status" value="1"/>
</dbReference>